<protein>
    <recommendedName>
        <fullName>Arginine kinase</fullName>
        <shortName>AK</shortName>
        <ecNumber>2.7.3.3</ecNumber>
    </recommendedName>
</protein>
<comment type="catalytic activity">
    <reaction>
        <text>L-arginine + ATP = N(omega)-phospho-L-arginine + ADP + H(+)</text>
        <dbReference type="Rhea" id="RHEA:22940"/>
        <dbReference type="ChEBI" id="CHEBI:15378"/>
        <dbReference type="ChEBI" id="CHEBI:30616"/>
        <dbReference type="ChEBI" id="CHEBI:32682"/>
        <dbReference type="ChEBI" id="CHEBI:58477"/>
        <dbReference type="ChEBI" id="CHEBI:456216"/>
        <dbReference type="EC" id="2.7.3.3"/>
    </reaction>
</comment>
<comment type="subunit">
    <text>Homodimer.</text>
</comment>
<comment type="PTM">
    <text>The N-terminus is blocked.</text>
</comment>
<comment type="similarity">
    <text evidence="2 3">Belongs to the ATP:guanido phosphotransferase family.</text>
</comment>
<proteinExistence type="evidence at protein level"/>
<organism>
    <name type="scientific">Stichopus japonicus</name>
    <name type="common">Sea cucumber</name>
    <dbReference type="NCBI Taxonomy" id="307972"/>
    <lineage>
        <taxon>Eukaryota</taxon>
        <taxon>Metazoa</taxon>
        <taxon>Echinodermata</taxon>
        <taxon>Eleutherozoa</taxon>
        <taxon>Echinozoa</taxon>
        <taxon>Holothuroidea</taxon>
        <taxon>Aspidochirotacea</taxon>
        <taxon>Aspidochirotida</taxon>
        <taxon>Stichopodidae</taxon>
        <taxon>Apostichopus</taxon>
    </lineage>
</organism>
<keyword id="KW-0002">3D-structure</keyword>
<keyword id="KW-0067">ATP-binding</keyword>
<keyword id="KW-0903">Direct protein sequencing</keyword>
<keyword id="KW-0418">Kinase</keyword>
<keyword id="KW-0547">Nucleotide-binding</keyword>
<keyword id="KW-0808">Transferase</keyword>
<name>KARG_STIJA</name>
<evidence type="ECO:0000250" key="1"/>
<evidence type="ECO:0000255" key="2">
    <source>
        <dbReference type="PROSITE-ProRule" id="PRU00842"/>
    </source>
</evidence>
<evidence type="ECO:0000255" key="3">
    <source>
        <dbReference type="PROSITE-ProRule" id="PRU00843"/>
    </source>
</evidence>
<evidence type="ECO:0000305" key="4"/>
<evidence type="ECO:0007829" key="5">
    <source>
        <dbReference type="PDB" id="3JU5"/>
    </source>
</evidence>
<evidence type="ECO:0007829" key="6">
    <source>
        <dbReference type="PDB" id="3JU6"/>
    </source>
</evidence>
<reference evidence="4" key="1">
    <citation type="journal article" date="1999" name="Biochem. J.">
        <title>Arginine kinase evolved twice: evidence that echinoderm arginine kinase originated from creatine kinase.</title>
        <authorList>
            <person name="Suzuki T."/>
            <person name="Kamidochi M."/>
            <person name="Inoue N."/>
            <person name="Kawamichi H."/>
            <person name="Yazawa Y."/>
            <person name="Furukohri T."/>
            <person name="Ellington R.W."/>
        </authorList>
    </citation>
    <scope>NUCLEOTIDE SEQUENCE [MRNA]</scope>
    <scope>PROTEIN SEQUENCE OF 13-20; 28-36; 163-168; 173-196; 214-228; 265-279; 311-321 AND 361-265</scope>
    <source>
        <tissue>Muscle</tissue>
    </source>
</reference>
<gene>
    <name type="primary">AK</name>
</gene>
<sequence length="370" mass="42048">MANLNQKKYPAKDDFPNFEGHKSLLSKYLTADMYAKLRDVATPSGYTLDRAIQNGVDNPDFHLGLLAGDEETYTVFADLFDPVIEEYHNGFKKTDNHKTDLDASKILDDVLDPAYVISSRVRTGRNIRGMALSPHVCRSERRAIEKMVSEALNSLAADLKGKYYSLMKMDEKTQQQLIDDHFLFDRPVSRHFTSGGMARDFPDGRGIWHNDKKNFLVWINEEDHTRIISMQMGGNMKEVFERFTRGLTEVEKHIKDKTGKEFMKNDHLGFVLTCPSNLGTGVRCSVHAKLPHMAKDKRFEEICTKMRLQKRGTSGEFTESVGGVYDISNLDRLGSSEVEQVNCVIKGVKVLIEMEKKLEKGESIDDLVPK</sequence>
<dbReference type="EC" id="2.7.3.3"/>
<dbReference type="EMBL" id="AB025275">
    <property type="protein sequence ID" value="BAA76385.1"/>
    <property type="molecule type" value="mRNA"/>
</dbReference>
<dbReference type="PDB" id="3JU5">
    <property type="method" value="X-ray"/>
    <property type="resolution" value="1.75 A"/>
    <property type="chains" value="A/B/C/D=1-370"/>
</dbReference>
<dbReference type="PDB" id="3JU6">
    <property type="method" value="X-ray"/>
    <property type="resolution" value="2.45 A"/>
    <property type="chains" value="A/B/C/D=1-370"/>
</dbReference>
<dbReference type="PDBsum" id="3JU5"/>
<dbReference type="PDBsum" id="3JU6"/>
<dbReference type="SMR" id="Q9XY07"/>
<dbReference type="EvolutionaryTrace" id="Q9XY07"/>
<dbReference type="GO" id="GO:0005615">
    <property type="term" value="C:extracellular space"/>
    <property type="evidence" value="ECO:0007669"/>
    <property type="project" value="TreeGrafter"/>
</dbReference>
<dbReference type="GO" id="GO:0004054">
    <property type="term" value="F:arginine kinase activity"/>
    <property type="evidence" value="ECO:0007669"/>
    <property type="project" value="UniProtKB-EC"/>
</dbReference>
<dbReference type="GO" id="GO:0005524">
    <property type="term" value="F:ATP binding"/>
    <property type="evidence" value="ECO:0007669"/>
    <property type="project" value="UniProtKB-KW"/>
</dbReference>
<dbReference type="GO" id="GO:0004111">
    <property type="term" value="F:creatine kinase activity"/>
    <property type="evidence" value="ECO:0007669"/>
    <property type="project" value="InterPro"/>
</dbReference>
<dbReference type="GO" id="GO:0046314">
    <property type="term" value="P:phosphocreatine biosynthetic process"/>
    <property type="evidence" value="ECO:0007669"/>
    <property type="project" value="InterPro"/>
</dbReference>
<dbReference type="CDD" id="cd00716">
    <property type="entry name" value="creatine_kinase_like"/>
    <property type="match status" value="1"/>
</dbReference>
<dbReference type="FunFam" id="3.30.590.10:FF:000002">
    <property type="entry name" value="Creatine kinase S-type, mitochondrial"/>
    <property type="match status" value="1"/>
</dbReference>
<dbReference type="FunFam" id="1.10.135.10:FF:000005">
    <property type="entry name" value="Glycocyamine kinase beta chain"/>
    <property type="match status" value="1"/>
</dbReference>
<dbReference type="Gene3D" id="1.10.135.10">
    <property type="entry name" value="ATP:guanido phosphotransferase, N-terminal domain"/>
    <property type="match status" value="1"/>
</dbReference>
<dbReference type="Gene3D" id="3.30.590.10">
    <property type="entry name" value="Glutamine synthetase/guanido kinase, catalytic domain"/>
    <property type="match status" value="1"/>
</dbReference>
<dbReference type="InterPro" id="IPR000749">
    <property type="entry name" value="ATP-guanido_PTrfase"/>
</dbReference>
<dbReference type="InterPro" id="IPR022415">
    <property type="entry name" value="ATP-guanido_PTrfase_AS"/>
</dbReference>
<dbReference type="InterPro" id="IPR022414">
    <property type="entry name" value="ATP-guanido_PTrfase_cat"/>
</dbReference>
<dbReference type="InterPro" id="IPR022413">
    <property type="entry name" value="ATP-guanido_PTrfase_N"/>
</dbReference>
<dbReference type="InterPro" id="IPR036802">
    <property type="entry name" value="ATP-guanido_PTrfase_N_sf"/>
</dbReference>
<dbReference type="InterPro" id="IPR014746">
    <property type="entry name" value="Gln_synth/guanido_kin_cat_dom"/>
</dbReference>
<dbReference type="PANTHER" id="PTHR11547">
    <property type="entry name" value="ARGININE OR CREATINE KINASE"/>
    <property type="match status" value="1"/>
</dbReference>
<dbReference type="PANTHER" id="PTHR11547:SF63">
    <property type="entry name" value="CREATINE KINASE M-TYPE"/>
    <property type="match status" value="1"/>
</dbReference>
<dbReference type="Pfam" id="PF00217">
    <property type="entry name" value="ATP-gua_Ptrans"/>
    <property type="match status" value="1"/>
</dbReference>
<dbReference type="Pfam" id="PF02807">
    <property type="entry name" value="ATP-gua_PtransN"/>
    <property type="match status" value="1"/>
</dbReference>
<dbReference type="SUPFAM" id="SSF55931">
    <property type="entry name" value="Glutamine synthetase/guanido kinase"/>
    <property type="match status" value="1"/>
</dbReference>
<dbReference type="SUPFAM" id="SSF48034">
    <property type="entry name" value="Guanido kinase N-terminal domain"/>
    <property type="match status" value="1"/>
</dbReference>
<dbReference type="PROSITE" id="PS00112">
    <property type="entry name" value="PHOSPHAGEN_KINASE"/>
    <property type="match status" value="1"/>
</dbReference>
<dbReference type="PROSITE" id="PS51510">
    <property type="entry name" value="PHOSPHAGEN_KINASE_C"/>
    <property type="match status" value="1"/>
</dbReference>
<dbReference type="PROSITE" id="PS51509">
    <property type="entry name" value="PHOSPHAGEN_KINASE_N"/>
    <property type="match status" value="1"/>
</dbReference>
<accession>Q9XY07</accession>
<feature type="chain" id="PRO_0000212005" description="Arginine kinase">
    <location>
        <begin position="1"/>
        <end position="370"/>
    </location>
</feature>
<feature type="domain" description="Phosphagen kinase N-terminal" evidence="2">
    <location>
        <begin position="6"/>
        <end position="89"/>
    </location>
</feature>
<feature type="domain" description="Phosphagen kinase C-terminal" evidence="3">
    <location>
        <begin position="115"/>
        <end position="358"/>
    </location>
</feature>
<feature type="binding site" evidence="3">
    <location>
        <begin position="118"/>
        <end position="122"/>
    </location>
    <ligand>
        <name>ATP</name>
        <dbReference type="ChEBI" id="CHEBI:30616"/>
    </ligand>
</feature>
<feature type="binding site" evidence="3">
    <location>
        <position position="181"/>
    </location>
    <ligand>
        <name>ATP</name>
        <dbReference type="ChEBI" id="CHEBI:30616"/>
    </ligand>
</feature>
<feature type="binding site" evidence="1">
    <location>
        <position position="222"/>
    </location>
    <ligand>
        <name>substrate</name>
    </ligand>
</feature>
<feature type="binding site" evidence="3">
    <location>
        <position position="226"/>
    </location>
    <ligand>
        <name>ATP</name>
        <dbReference type="ChEBI" id="CHEBI:30616"/>
    </ligand>
</feature>
<feature type="binding site" evidence="1">
    <location>
        <position position="274"/>
    </location>
    <ligand>
        <name>substrate</name>
    </ligand>
</feature>
<feature type="binding site" evidence="3">
    <location>
        <begin position="283"/>
        <end position="287"/>
    </location>
    <ligand>
        <name>ATP</name>
        <dbReference type="ChEBI" id="CHEBI:30616"/>
    </ligand>
</feature>
<feature type="binding site" evidence="3">
    <location>
        <begin position="311"/>
        <end position="316"/>
    </location>
    <ligand>
        <name>ATP</name>
        <dbReference type="ChEBI" id="CHEBI:30616"/>
    </ligand>
</feature>
<feature type="binding site" evidence="1">
    <location>
        <position position="316"/>
    </location>
    <ligand>
        <name>substrate</name>
    </ligand>
</feature>
<feature type="helix" evidence="5">
    <location>
        <begin position="6"/>
        <end position="8"/>
    </location>
</feature>
<feature type="helix" evidence="5">
    <location>
        <begin position="11"/>
        <end position="14"/>
    </location>
</feature>
<feature type="helix" evidence="5">
    <location>
        <begin position="24"/>
        <end position="28"/>
    </location>
</feature>
<feature type="helix" evidence="5">
    <location>
        <begin position="31"/>
        <end position="37"/>
    </location>
</feature>
<feature type="helix" evidence="5">
    <location>
        <begin position="48"/>
        <end position="56"/>
    </location>
</feature>
<feature type="helix" evidence="5">
    <location>
        <begin position="72"/>
        <end position="75"/>
    </location>
</feature>
<feature type="helix" evidence="5">
    <location>
        <begin position="77"/>
        <end position="87"/>
    </location>
</feature>
<feature type="strand" evidence="6">
    <location>
        <begin position="93"/>
        <end position="95"/>
    </location>
</feature>
<feature type="helix" evidence="5">
    <location>
        <begin position="103"/>
        <end position="105"/>
    </location>
</feature>
<feature type="turn" evidence="5">
    <location>
        <begin position="113"/>
        <end position="115"/>
    </location>
</feature>
<feature type="strand" evidence="5">
    <location>
        <begin position="116"/>
        <end position="125"/>
    </location>
</feature>
<feature type="turn" evidence="5">
    <location>
        <begin position="133"/>
        <end position="135"/>
    </location>
</feature>
<feature type="helix" evidence="5">
    <location>
        <begin position="138"/>
        <end position="153"/>
    </location>
</feature>
<feature type="helix" evidence="5">
    <location>
        <begin position="157"/>
        <end position="159"/>
    </location>
</feature>
<feature type="strand" evidence="5">
    <location>
        <begin position="161"/>
        <end position="168"/>
    </location>
</feature>
<feature type="helix" evidence="5">
    <location>
        <begin position="171"/>
        <end position="179"/>
    </location>
</feature>
<feature type="helix" evidence="5">
    <location>
        <begin position="190"/>
        <end position="194"/>
    </location>
</feature>
<feature type="turn" evidence="5">
    <location>
        <begin position="195"/>
        <end position="204"/>
    </location>
</feature>
<feature type="strand" evidence="5">
    <location>
        <begin position="206"/>
        <end position="210"/>
    </location>
</feature>
<feature type="strand" evidence="5">
    <location>
        <begin position="213"/>
        <end position="235"/>
    </location>
</feature>
<feature type="helix" evidence="5">
    <location>
        <begin position="236"/>
        <end position="258"/>
    </location>
</feature>
<feature type="turn" evidence="5">
    <location>
        <begin position="266"/>
        <end position="268"/>
    </location>
</feature>
<feature type="helix" evidence="5">
    <location>
        <begin position="275"/>
        <end position="277"/>
    </location>
</feature>
<feature type="strand" evidence="5">
    <location>
        <begin position="283"/>
        <end position="289"/>
    </location>
</feature>
<feature type="helix" evidence="5">
    <location>
        <begin position="291"/>
        <end position="294"/>
    </location>
</feature>
<feature type="helix" evidence="5">
    <location>
        <begin position="299"/>
        <end position="305"/>
    </location>
</feature>
<feature type="strand" evidence="5">
    <location>
        <begin position="308"/>
        <end position="312"/>
    </location>
</feature>
<feature type="strand" evidence="5">
    <location>
        <begin position="324"/>
        <end position="330"/>
    </location>
</feature>
<feature type="strand" evidence="5">
    <location>
        <begin position="333"/>
        <end position="335"/>
    </location>
</feature>
<feature type="helix" evidence="5">
    <location>
        <begin position="337"/>
        <end position="359"/>
    </location>
</feature>
<feature type="helix" evidence="5">
    <location>
        <begin position="365"/>
        <end position="367"/>
    </location>
</feature>